<proteinExistence type="evidence at transcript level"/>
<feature type="chain" id="PRO_0000317175" description="Phosphatidylinositol-3-phosphatase SAC1-B">
    <location>
        <begin position="1"/>
        <end position="586"/>
    </location>
</feature>
<feature type="topological domain" description="Cytoplasmic" evidence="1">
    <location>
        <begin position="1"/>
        <end position="519"/>
    </location>
</feature>
<feature type="transmembrane region" description="Helical" evidence="3">
    <location>
        <begin position="520"/>
        <end position="540"/>
    </location>
</feature>
<feature type="topological domain" description="Lumenal" evidence="1">
    <location>
        <begin position="541"/>
        <end position="547"/>
    </location>
</feature>
<feature type="transmembrane region" description="Helical" evidence="3">
    <location>
        <begin position="548"/>
        <end position="568"/>
    </location>
</feature>
<feature type="topological domain" description="Cytoplasmic" evidence="1">
    <location>
        <begin position="569"/>
        <end position="586"/>
    </location>
</feature>
<feature type="domain" description="SAC" evidence="4">
    <location>
        <begin position="121"/>
        <end position="450"/>
    </location>
</feature>
<feature type="region of interest" description="Essential for phosphatidylinositol-4-phosphate phosphatase activity" evidence="2">
    <location>
        <begin position="451"/>
        <end position="586"/>
    </location>
</feature>
<gene>
    <name type="primary">sacm1lb</name>
    <name type="ORF">zgc:158642</name>
</gene>
<reference key="1">
    <citation type="submission" date="2006-12" db="EMBL/GenBank/DDBJ databases">
        <authorList>
            <consortium name="NIH - Zebrafish Gene Collection (ZGC) project"/>
        </authorList>
    </citation>
    <scope>NUCLEOTIDE SEQUENCE [LARGE SCALE MRNA]</scope>
    <source>
        <tissue>Testis</tissue>
    </source>
</reference>
<organism>
    <name type="scientific">Danio rerio</name>
    <name type="common">Zebrafish</name>
    <name type="synonym">Brachydanio rerio</name>
    <dbReference type="NCBI Taxonomy" id="7955"/>
    <lineage>
        <taxon>Eukaryota</taxon>
        <taxon>Metazoa</taxon>
        <taxon>Chordata</taxon>
        <taxon>Craniata</taxon>
        <taxon>Vertebrata</taxon>
        <taxon>Euteleostomi</taxon>
        <taxon>Actinopterygii</taxon>
        <taxon>Neopterygii</taxon>
        <taxon>Teleostei</taxon>
        <taxon>Ostariophysi</taxon>
        <taxon>Cypriniformes</taxon>
        <taxon>Danionidae</taxon>
        <taxon>Danioninae</taxon>
        <taxon>Danio</taxon>
    </lineage>
</organism>
<sequence>MASTYNSFNLHTTAEKFYIEACDDGVGDVLAIDRVSTEKTLTVRKDVPPSAVTRPICGIMGTIRLVAGVYLIVITKKKKVGDLLGHAVWKASDFDIISYKKTVLHLTDNQMQDNKVFLSMLNSVLNTDGFYFATDYDLTHTLQRLSNTSPEFQEMTLLERADQRFVWNGHLLREFMAQPELHRFVFPVIHGFIAMRSCCINGKIFDWNLISRRSCFRAGVRYYVRGIDSEGHAANFVETEQIIQYNGAKASFIQTRGSIPFYWSQRPNLKYKPKPQISKSINHLDGFQRHFDSQIIIYGKQVILNLVNQKGSEKPLEQAFAKMVGSLGNGMIKYIAFDFHKECSRMRWHRLQILVDTVAELQDEFGYFLVDSDGSVQMQQDGTFRSNCMDCLDRTNVVQSLLARRSLQSQLERMAVLHVGQRIEEQADFEKIYKNAWADNANACAKQYAGTGALKTDFTRTGKRTQWGLLMDGWNSMIRYYKNNFSDGFRQDSIDLFLGNYAVEEADMNTPLHEPKDWKFLTLPIIMVVAFSMCIICLLMAGDTWTETLAYVLFWGSASVVTGGVILFNGRDFVDAPRLVQKEKMD</sequence>
<name>SAC1B_DANRE</name>
<evidence type="ECO:0000250" key="1">
    <source>
        <dbReference type="UniProtKB" id="Q9ES21"/>
    </source>
</evidence>
<evidence type="ECO:0000250" key="2">
    <source>
        <dbReference type="UniProtKB" id="Q9NTJ5"/>
    </source>
</evidence>
<evidence type="ECO:0000255" key="3"/>
<evidence type="ECO:0000255" key="4">
    <source>
        <dbReference type="PROSITE-ProRule" id="PRU00183"/>
    </source>
</evidence>
<comment type="function">
    <text evidence="1">Phosphoinositide phosphatase which catalyzes the hydrolysis of phosphatidylinositol 4-phosphate (PtdIns(4)P), phosphatidylinositol 3-phosphate (PtdIns(3)P) and has low activity towards phosphatidylinositol-3,5-bisphosphate (PtdIns(3,5)P2).</text>
</comment>
<comment type="catalytic activity">
    <reaction evidence="1">
        <text>a 1,2-diacyl-sn-glycero-3-phospho-(1D-myo-inositol-3-phosphate) + H2O = a 1,2-diacyl-sn-glycero-3-phospho-(1D-myo-inositol) + phosphate</text>
        <dbReference type="Rhea" id="RHEA:12316"/>
        <dbReference type="ChEBI" id="CHEBI:15377"/>
        <dbReference type="ChEBI" id="CHEBI:43474"/>
        <dbReference type="ChEBI" id="CHEBI:57880"/>
        <dbReference type="ChEBI" id="CHEBI:58088"/>
        <dbReference type="EC" id="3.1.3.64"/>
    </reaction>
    <physiologicalReaction direction="left-to-right" evidence="1">
        <dbReference type="Rhea" id="RHEA:12317"/>
    </physiologicalReaction>
</comment>
<comment type="catalytic activity">
    <reaction evidence="1">
        <text>a 1,2-diacyl-sn-glycero-3-phospho-(1D-myo-inositol 4-phosphate) + H2O = a 1,2-diacyl-sn-glycero-3-phospho-(1D-myo-inositol) + phosphate</text>
        <dbReference type="Rhea" id="RHEA:55652"/>
        <dbReference type="ChEBI" id="CHEBI:15377"/>
        <dbReference type="ChEBI" id="CHEBI:43474"/>
        <dbReference type="ChEBI" id="CHEBI:57880"/>
        <dbReference type="ChEBI" id="CHEBI:58178"/>
    </reaction>
    <physiologicalReaction direction="left-to-right" evidence="1">
        <dbReference type="Rhea" id="RHEA:55653"/>
    </physiologicalReaction>
</comment>
<comment type="subcellular location">
    <subcellularLocation>
        <location evidence="1">Endoplasmic reticulum membrane</location>
        <topology evidence="3">Multi-pass membrane protein</topology>
    </subcellularLocation>
    <subcellularLocation>
        <location evidence="2">Golgi apparatus membrane</location>
        <topology evidence="3">Multi-pass membrane protein</topology>
    </subcellularLocation>
</comment>
<protein>
    <recommendedName>
        <fullName>Phosphatidylinositol-3-phosphatase SAC1-B</fullName>
        <ecNumber evidence="1">3.1.3.64</ecNumber>
    </recommendedName>
    <alternativeName>
        <fullName evidence="1">Phosphatidylinositol-4-phosphate phosphatase</fullName>
    </alternativeName>
    <alternativeName>
        <fullName>Suppressor of actin mutations 1-like protein B</fullName>
    </alternativeName>
</protein>
<keyword id="KW-0256">Endoplasmic reticulum</keyword>
<keyword id="KW-0333">Golgi apparatus</keyword>
<keyword id="KW-0378">Hydrolase</keyword>
<keyword id="KW-0472">Membrane</keyword>
<keyword id="KW-1185">Reference proteome</keyword>
<keyword id="KW-0812">Transmembrane</keyword>
<keyword id="KW-1133">Transmembrane helix</keyword>
<accession>A1L244</accession>
<dbReference type="EC" id="3.1.3.64" evidence="1"/>
<dbReference type="EMBL" id="BC129344">
    <property type="protein sequence ID" value="AAI29345.1"/>
    <property type="molecule type" value="mRNA"/>
</dbReference>
<dbReference type="RefSeq" id="NP_001074093.1">
    <property type="nucleotide sequence ID" value="NM_001080624.1"/>
</dbReference>
<dbReference type="SMR" id="A1L244"/>
<dbReference type="FunCoup" id="A1L244">
    <property type="interactions" value="3312"/>
</dbReference>
<dbReference type="STRING" id="7955.ENSDARP00000077948"/>
<dbReference type="PaxDb" id="7955-ENSDARP00000077948"/>
<dbReference type="PeptideAtlas" id="A1L244"/>
<dbReference type="GeneID" id="791142"/>
<dbReference type="KEGG" id="dre:791142"/>
<dbReference type="AGR" id="ZFIN:ZDB-GENE-070112-542"/>
<dbReference type="CTD" id="791142"/>
<dbReference type="ZFIN" id="ZDB-GENE-070112-542">
    <property type="gene designation" value="sacm1lb"/>
</dbReference>
<dbReference type="eggNOG" id="KOG1889">
    <property type="taxonomic scope" value="Eukaryota"/>
</dbReference>
<dbReference type="InParanoid" id="A1L244"/>
<dbReference type="OrthoDB" id="405996at2759"/>
<dbReference type="PhylomeDB" id="A1L244"/>
<dbReference type="Reactome" id="R-DRE-1483248">
    <property type="pathway name" value="Synthesis of PIPs at the ER membrane"/>
</dbReference>
<dbReference type="Reactome" id="R-DRE-1660514">
    <property type="pathway name" value="Synthesis of PIPs at the Golgi membrane"/>
</dbReference>
<dbReference type="PRO" id="PR:A1L244"/>
<dbReference type="Proteomes" id="UP000000437">
    <property type="component" value="Chromosome 16"/>
</dbReference>
<dbReference type="GO" id="GO:0005783">
    <property type="term" value="C:endoplasmic reticulum"/>
    <property type="evidence" value="ECO:0000318"/>
    <property type="project" value="GO_Central"/>
</dbReference>
<dbReference type="GO" id="GO:0005789">
    <property type="term" value="C:endoplasmic reticulum membrane"/>
    <property type="evidence" value="ECO:0000250"/>
    <property type="project" value="UniProtKB"/>
</dbReference>
<dbReference type="GO" id="GO:0140268">
    <property type="term" value="C:endoplasmic reticulum-plasma membrane contact site"/>
    <property type="evidence" value="ECO:0000250"/>
    <property type="project" value="UniProtKB"/>
</dbReference>
<dbReference type="GO" id="GO:0000139">
    <property type="term" value="C:Golgi membrane"/>
    <property type="evidence" value="ECO:0000250"/>
    <property type="project" value="UniProtKB"/>
</dbReference>
<dbReference type="GO" id="GO:0016791">
    <property type="term" value="F:phosphatase activity"/>
    <property type="evidence" value="ECO:0000250"/>
    <property type="project" value="UniProtKB"/>
</dbReference>
<dbReference type="GO" id="GO:0004438">
    <property type="term" value="F:phosphatidylinositol-3-phosphate phosphatase activity"/>
    <property type="evidence" value="ECO:0007669"/>
    <property type="project" value="UniProtKB-EC"/>
</dbReference>
<dbReference type="GO" id="GO:0043812">
    <property type="term" value="F:phosphatidylinositol-4-phosphate phosphatase activity"/>
    <property type="evidence" value="ECO:0000250"/>
    <property type="project" value="UniProtKB"/>
</dbReference>
<dbReference type="GO" id="GO:0046856">
    <property type="term" value="P:phosphatidylinositol dephosphorylation"/>
    <property type="evidence" value="ECO:0000250"/>
    <property type="project" value="UniProtKB"/>
</dbReference>
<dbReference type="InterPro" id="IPR002013">
    <property type="entry name" value="SAC_dom"/>
</dbReference>
<dbReference type="PANTHER" id="PTHR45662">
    <property type="entry name" value="PHOSPHATIDYLINOSITIDE PHOSPHATASE SAC1"/>
    <property type="match status" value="1"/>
</dbReference>
<dbReference type="PANTHER" id="PTHR45662:SF19">
    <property type="entry name" value="PHOSPHATIDYLINOSITOL-3-PHOSPHATASE SAC1-B"/>
    <property type="match status" value="1"/>
</dbReference>
<dbReference type="Pfam" id="PF02383">
    <property type="entry name" value="Syja_N"/>
    <property type="match status" value="1"/>
</dbReference>
<dbReference type="PROSITE" id="PS50275">
    <property type="entry name" value="SAC"/>
    <property type="match status" value="1"/>
</dbReference>